<comment type="function">
    <text evidence="1">The RuvA-RuvB-RuvC complex processes Holliday junction (HJ) DNA during genetic recombination and DNA repair, while the RuvA-RuvB complex plays an important role in the rescue of blocked DNA replication forks via replication fork reversal (RFR). RuvA specifically binds to HJ cruciform DNA, conferring on it an open structure. The RuvB hexamer acts as an ATP-dependent pump, pulling dsDNA into and through the RuvAB complex. RuvB forms 2 homohexamers on either side of HJ DNA bound by 1 or 2 RuvA tetramers; 4 subunits per hexamer contact DNA at a time. Coordinated motions by a converter formed by DNA-disengaged RuvB subunits stimulates ATP hydrolysis and nucleotide exchange. Immobilization of the converter enables RuvB to convert the ATP-contained energy into a lever motion, pulling 2 nucleotides of DNA out of the RuvA tetramer per ATP hydrolyzed, thus driving DNA branch migration. The RuvB motors rotate together with the DNA substrate, which together with the progressing nucleotide cycle form the mechanistic basis for DNA recombination by continuous HJ branch migration. Branch migration allows RuvC to scan DNA until it finds its consensus sequence, where it cleaves and resolves cruciform DNA.</text>
</comment>
<comment type="catalytic activity">
    <reaction evidence="1">
        <text>ATP + H2O = ADP + phosphate + H(+)</text>
        <dbReference type="Rhea" id="RHEA:13065"/>
        <dbReference type="ChEBI" id="CHEBI:15377"/>
        <dbReference type="ChEBI" id="CHEBI:15378"/>
        <dbReference type="ChEBI" id="CHEBI:30616"/>
        <dbReference type="ChEBI" id="CHEBI:43474"/>
        <dbReference type="ChEBI" id="CHEBI:456216"/>
    </reaction>
</comment>
<comment type="subunit">
    <text evidence="1">Homohexamer. Forms an RuvA(8)-RuvB(12)-Holliday junction (HJ) complex. HJ DNA is sandwiched between 2 RuvA tetramers; dsDNA enters through RuvA and exits via RuvB. An RuvB hexamer assembles on each DNA strand where it exits the tetramer. Each RuvB hexamer is contacted by two RuvA subunits (via domain III) on 2 adjacent RuvB subunits; this complex drives branch migration. In the full resolvosome a probable DNA-RuvA(4)-RuvB(12)-RuvC(2) complex forms which resolves the HJ.</text>
</comment>
<comment type="subcellular location">
    <subcellularLocation>
        <location evidence="1">Cytoplasm</location>
    </subcellularLocation>
</comment>
<comment type="domain">
    <text evidence="1">Has 3 domains, the large (RuvB-L) and small ATPase (RuvB-S) domains and the C-terminal head (RuvB-H) domain. The head domain binds DNA, while the ATPase domains jointly bind ATP, ADP or are empty depending on the state of the subunit in the translocation cycle. During a single DNA translocation step the structure of each domain remains the same, but their relative positions change.</text>
</comment>
<comment type="similarity">
    <text evidence="1">Belongs to the RuvB family.</text>
</comment>
<protein>
    <recommendedName>
        <fullName evidence="1">Holliday junction branch migration complex subunit RuvB</fullName>
        <ecNumber evidence="1">3.6.4.-</ecNumber>
    </recommendedName>
</protein>
<proteinExistence type="inferred from homology"/>
<organism>
    <name type="scientific">Burkholderia multivorans (strain ATCC 17616 / 249)</name>
    <dbReference type="NCBI Taxonomy" id="395019"/>
    <lineage>
        <taxon>Bacteria</taxon>
        <taxon>Pseudomonadati</taxon>
        <taxon>Pseudomonadota</taxon>
        <taxon>Betaproteobacteria</taxon>
        <taxon>Burkholderiales</taxon>
        <taxon>Burkholderiaceae</taxon>
        <taxon>Burkholderia</taxon>
        <taxon>Burkholderia cepacia complex</taxon>
    </lineage>
</organism>
<evidence type="ECO:0000255" key="1">
    <source>
        <dbReference type="HAMAP-Rule" id="MF_00016"/>
    </source>
</evidence>
<accession>A9AH73</accession>
<keyword id="KW-0067">ATP-binding</keyword>
<keyword id="KW-0963">Cytoplasm</keyword>
<keyword id="KW-0227">DNA damage</keyword>
<keyword id="KW-0233">DNA recombination</keyword>
<keyword id="KW-0234">DNA repair</keyword>
<keyword id="KW-0238">DNA-binding</keyword>
<keyword id="KW-0378">Hydrolase</keyword>
<keyword id="KW-0547">Nucleotide-binding</keyword>
<keyword id="KW-1185">Reference proteome</keyword>
<feature type="chain" id="PRO_1000089624" description="Holliday junction branch migration complex subunit RuvB">
    <location>
        <begin position="1"/>
        <end position="355"/>
    </location>
</feature>
<feature type="region of interest" description="Large ATPase domain (RuvB-L)" evidence="1">
    <location>
        <begin position="4"/>
        <end position="190"/>
    </location>
</feature>
<feature type="region of interest" description="Small ATPAse domain (RuvB-S)" evidence="1">
    <location>
        <begin position="191"/>
        <end position="261"/>
    </location>
</feature>
<feature type="region of interest" description="Head domain (RuvB-H)" evidence="1">
    <location>
        <begin position="264"/>
        <end position="355"/>
    </location>
</feature>
<feature type="binding site" evidence="1">
    <location>
        <position position="29"/>
    </location>
    <ligand>
        <name>ATP</name>
        <dbReference type="ChEBI" id="CHEBI:30616"/>
    </ligand>
</feature>
<feature type="binding site" evidence="1">
    <location>
        <position position="30"/>
    </location>
    <ligand>
        <name>ATP</name>
        <dbReference type="ChEBI" id="CHEBI:30616"/>
    </ligand>
</feature>
<feature type="binding site" evidence="1">
    <location>
        <position position="71"/>
    </location>
    <ligand>
        <name>ATP</name>
        <dbReference type="ChEBI" id="CHEBI:30616"/>
    </ligand>
</feature>
<feature type="binding site" evidence="1">
    <location>
        <position position="74"/>
    </location>
    <ligand>
        <name>ATP</name>
        <dbReference type="ChEBI" id="CHEBI:30616"/>
    </ligand>
</feature>
<feature type="binding site" evidence="1">
    <location>
        <position position="75"/>
    </location>
    <ligand>
        <name>ATP</name>
        <dbReference type="ChEBI" id="CHEBI:30616"/>
    </ligand>
</feature>
<feature type="binding site" evidence="1">
    <location>
        <position position="75"/>
    </location>
    <ligand>
        <name>Mg(2+)</name>
        <dbReference type="ChEBI" id="CHEBI:18420"/>
    </ligand>
</feature>
<feature type="binding site" evidence="1">
    <location>
        <position position="76"/>
    </location>
    <ligand>
        <name>ATP</name>
        <dbReference type="ChEBI" id="CHEBI:30616"/>
    </ligand>
</feature>
<feature type="binding site" evidence="1">
    <location>
        <begin position="137"/>
        <end position="139"/>
    </location>
    <ligand>
        <name>ATP</name>
        <dbReference type="ChEBI" id="CHEBI:30616"/>
    </ligand>
</feature>
<feature type="binding site" evidence="1">
    <location>
        <position position="180"/>
    </location>
    <ligand>
        <name>ATP</name>
        <dbReference type="ChEBI" id="CHEBI:30616"/>
    </ligand>
</feature>
<feature type="binding site" evidence="1">
    <location>
        <position position="190"/>
    </location>
    <ligand>
        <name>ATP</name>
        <dbReference type="ChEBI" id="CHEBI:30616"/>
    </ligand>
</feature>
<feature type="binding site" evidence="1">
    <location>
        <position position="227"/>
    </location>
    <ligand>
        <name>ATP</name>
        <dbReference type="ChEBI" id="CHEBI:30616"/>
    </ligand>
</feature>
<feature type="binding site" evidence="1">
    <location>
        <position position="300"/>
    </location>
    <ligand>
        <name>DNA</name>
        <dbReference type="ChEBI" id="CHEBI:16991"/>
    </ligand>
</feature>
<feature type="binding site" evidence="1">
    <location>
        <position position="319"/>
    </location>
    <ligand>
        <name>DNA</name>
        <dbReference type="ChEBI" id="CHEBI:16991"/>
    </ligand>
</feature>
<feature type="binding site" evidence="1">
    <location>
        <position position="324"/>
    </location>
    <ligand>
        <name>DNA</name>
        <dbReference type="ChEBI" id="CHEBI:16991"/>
    </ligand>
</feature>
<name>RUVB_BURM1</name>
<gene>
    <name evidence="1" type="primary">ruvB</name>
    <name type="ordered locus">Bmul_2696</name>
    <name type="ordered locus">BMULJ_00542</name>
</gene>
<reference key="1">
    <citation type="submission" date="2007-10" db="EMBL/GenBank/DDBJ databases">
        <title>Complete sequence of chromosome 1 of Burkholderia multivorans ATCC 17616.</title>
        <authorList>
            <person name="Copeland A."/>
            <person name="Lucas S."/>
            <person name="Lapidus A."/>
            <person name="Barry K."/>
            <person name="Glavina del Rio T."/>
            <person name="Dalin E."/>
            <person name="Tice H."/>
            <person name="Pitluck S."/>
            <person name="Chain P."/>
            <person name="Malfatti S."/>
            <person name="Shin M."/>
            <person name="Vergez L."/>
            <person name="Schmutz J."/>
            <person name="Larimer F."/>
            <person name="Land M."/>
            <person name="Hauser L."/>
            <person name="Kyrpides N."/>
            <person name="Kim E."/>
            <person name="Tiedje J."/>
            <person name="Richardson P."/>
        </authorList>
    </citation>
    <scope>NUCLEOTIDE SEQUENCE [LARGE SCALE GENOMIC DNA]</scope>
    <source>
        <strain>ATCC 17616 / 249</strain>
    </source>
</reference>
<reference key="2">
    <citation type="submission" date="2007-04" db="EMBL/GenBank/DDBJ databases">
        <title>Complete genome sequence of Burkholderia multivorans ATCC 17616.</title>
        <authorList>
            <person name="Ohtsubo Y."/>
            <person name="Yamashita A."/>
            <person name="Kurokawa K."/>
            <person name="Takami H."/>
            <person name="Yuhara S."/>
            <person name="Nishiyama E."/>
            <person name="Endo R."/>
            <person name="Miyazaki R."/>
            <person name="Ono A."/>
            <person name="Yano K."/>
            <person name="Ito M."/>
            <person name="Sota M."/>
            <person name="Yuji N."/>
            <person name="Hattori M."/>
            <person name="Tsuda M."/>
        </authorList>
    </citation>
    <scope>NUCLEOTIDE SEQUENCE [LARGE SCALE GENOMIC DNA]</scope>
    <source>
        <strain>ATCC 17616 / 249</strain>
    </source>
</reference>
<sequence length="355" mass="39117">MIETDKLAAERIIAATPASSHEEVFERALRPRQLDDYVGQEKVRGQLEIFIEAAKRRREPLDHVLLFGPPGLGKTTLAHIIAREMGVNLRQTSGPVLERAGDLAALLTNLEANDVLFIDEIHRLSPVVEEILYPALEDYQIDIMIGEGPAARSVKLDLQPFTLVGATTRAGMLTNPLRDRFGIVARLEFYDADQLSRIVQRSASLLNAQIDPNGALEIAKRSRGTPRIANRLLRRVRDYAEVKADGQITAAIADAALAMLDVDPVGFDLMDRKLLEAILHKFDGGPVGIDNLAAAIGEERDTIEDVLEPYLIQQGFLQRTPRGRVATLLTYRHFGLAAPDAGSPVQSIWDTPDAQ</sequence>
<dbReference type="EC" id="3.6.4.-" evidence="1"/>
<dbReference type="EMBL" id="CP000868">
    <property type="protein sequence ID" value="ABX16380.1"/>
    <property type="molecule type" value="Genomic_DNA"/>
</dbReference>
<dbReference type="EMBL" id="AP009385">
    <property type="protein sequence ID" value="BAG42506.1"/>
    <property type="molecule type" value="Genomic_DNA"/>
</dbReference>
<dbReference type="RefSeq" id="WP_006401680.1">
    <property type="nucleotide sequence ID" value="NC_010804.1"/>
</dbReference>
<dbReference type="SMR" id="A9AH73"/>
<dbReference type="STRING" id="395019.BMULJ_00542"/>
<dbReference type="GeneID" id="89568970"/>
<dbReference type="KEGG" id="bmj:BMULJ_00542"/>
<dbReference type="KEGG" id="bmu:Bmul_2696"/>
<dbReference type="eggNOG" id="COG2255">
    <property type="taxonomic scope" value="Bacteria"/>
</dbReference>
<dbReference type="HOGENOM" id="CLU_055599_1_0_4"/>
<dbReference type="Proteomes" id="UP000008815">
    <property type="component" value="Chromosome 1"/>
</dbReference>
<dbReference type="GO" id="GO:0005737">
    <property type="term" value="C:cytoplasm"/>
    <property type="evidence" value="ECO:0007669"/>
    <property type="project" value="UniProtKB-SubCell"/>
</dbReference>
<dbReference type="GO" id="GO:0048476">
    <property type="term" value="C:Holliday junction resolvase complex"/>
    <property type="evidence" value="ECO:0007669"/>
    <property type="project" value="UniProtKB-UniRule"/>
</dbReference>
<dbReference type="GO" id="GO:0005524">
    <property type="term" value="F:ATP binding"/>
    <property type="evidence" value="ECO:0007669"/>
    <property type="project" value="UniProtKB-UniRule"/>
</dbReference>
<dbReference type="GO" id="GO:0016887">
    <property type="term" value="F:ATP hydrolysis activity"/>
    <property type="evidence" value="ECO:0007669"/>
    <property type="project" value="InterPro"/>
</dbReference>
<dbReference type="GO" id="GO:0000400">
    <property type="term" value="F:four-way junction DNA binding"/>
    <property type="evidence" value="ECO:0007669"/>
    <property type="project" value="UniProtKB-UniRule"/>
</dbReference>
<dbReference type="GO" id="GO:0009378">
    <property type="term" value="F:four-way junction helicase activity"/>
    <property type="evidence" value="ECO:0007669"/>
    <property type="project" value="InterPro"/>
</dbReference>
<dbReference type="GO" id="GO:0006310">
    <property type="term" value="P:DNA recombination"/>
    <property type="evidence" value="ECO:0007669"/>
    <property type="project" value="UniProtKB-UniRule"/>
</dbReference>
<dbReference type="GO" id="GO:0006281">
    <property type="term" value="P:DNA repair"/>
    <property type="evidence" value="ECO:0007669"/>
    <property type="project" value="UniProtKB-UniRule"/>
</dbReference>
<dbReference type="CDD" id="cd00009">
    <property type="entry name" value="AAA"/>
    <property type="match status" value="1"/>
</dbReference>
<dbReference type="FunFam" id="1.10.10.10:FF:000086">
    <property type="entry name" value="Holliday junction ATP-dependent DNA helicase RuvB"/>
    <property type="match status" value="1"/>
</dbReference>
<dbReference type="FunFam" id="1.10.8.60:FF:000023">
    <property type="entry name" value="Holliday junction ATP-dependent DNA helicase RuvB"/>
    <property type="match status" value="1"/>
</dbReference>
<dbReference type="FunFam" id="3.40.50.300:FF:000073">
    <property type="entry name" value="Holliday junction ATP-dependent DNA helicase RuvB"/>
    <property type="match status" value="1"/>
</dbReference>
<dbReference type="Gene3D" id="1.10.8.60">
    <property type="match status" value="1"/>
</dbReference>
<dbReference type="Gene3D" id="3.40.50.300">
    <property type="entry name" value="P-loop containing nucleotide triphosphate hydrolases"/>
    <property type="match status" value="1"/>
</dbReference>
<dbReference type="Gene3D" id="1.10.10.10">
    <property type="entry name" value="Winged helix-like DNA-binding domain superfamily/Winged helix DNA-binding domain"/>
    <property type="match status" value="1"/>
</dbReference>
<dbReference type="HAMAP" id="MF_00016">
    <property type="entry name" value="DNA_HJ_migration_RuvB"/>
    <property type="match status" value="1"/>
</dbReference>
<dbReference type="InterPro" id="IPR003593">
    <property type="entry name" value="AAA+_ATPase"/>
</dbReference>
<dbReference type="InterPro" id="IPR041445">
    <property type="entry name" value="AAA_lid_4"/>
</dbReference>
<dbReference type="InterPro" id="IPR004605">
    <property type="entry name" value="DNA_helicase_Holl-junc_RuvB"/>
</dbReference>
<dbReference type="InterPro" id="IPR027417">
    <property type="entry name" value="P-loop_NTPase"/>
</dbReference>
<dbReference type="InterPro" id="IPR008824">
    <property type="entry name" value="RuvB-like_N"/>
</dbReference>
<dbReference type="InterPro" id="IPR008823">
    <property type="entry name" value="RuvB_C"/>
</dbReference>
<dbReference type="InterPro" id="IPR036388">
    <property type="entry name" value="WH-like_DNA-bd_sf"/>
</dbReference>
<dbReference type="InterPro" id="IPR036390">
    <property type="entry name" value="WH_DNA-bd_sf"/>
</dbReference>
<dbReference type="NCBIfam" id="NF000868">
    <property type="entry name" value="PRK00080.1"/>
    <property type="match status" value="1"/>
</dbReference>
<dbReference type="NCBIfam" id="TIGR00635">
    <property type="entry name" value="ruvB"/>
    <property type="match status" value="1"/>
</dbReference>
<dbReference type="PANTHER" id="PTHR42848">
    <property type="match status" value="1"/>
</dbReference>
<dbReference type="PANTHER" id="PTHR42848:SF1">
    <property type="entry name" value="HOLLIDAY JUNCTION BRANCH MIGRATION COMPLEX SUBUNIT RUVB"/>
    <property type="match status" value="1"/>
</dbReference>
<dbReference type="Pfam" id="PF17864">
    <property type="entry name" value="AAA_lid_4"/>
    <property type="match status" value="1"/>
</dbReference>
<dbReference type="Pfam" id="PF05491">
    <property type="entry name" value="RuvB_C"/>
    <property type="match status" value="1"/>
</dbReference>
<dbReference type="Pfam" id="PF05496">
    <property type="entry name" value="RuvB_N"/>
    <property type="match status" value="1"/>
</dbReference>
<dbReference type="SMART" id="SM00382">
    <property type="entry name" value="AAA"/>
    <property type="match status" value="1"/>
</dbReference>
<dbReference type="SUPFAM" id="SSF52540">
    <property type="entry name" value="P-loop containing nucleoside triphosphate hydrolases"/>
    <property type="match status" value="1"/>
</dbReference>
<dbReference type="SUPFAM" id="SSF46785">
    <property type="entry name" value="Winged helix' DNA-binding domain"/>
    <property type="match status" value="1"/>
</dbReference>